<feature type="chain" id="PRO_1000045486" description="Xaa-Pro dipeptidyl-peptidase">
    <location>
        <begin position="1"/>
        <end position="761"/>
    </location>
</feature>
<feature type="active site" description="Charge relay system" evidence="1">
    <location>
        <position position="347"/>
    </location>
</feature>
<feature type="active site" description="Charge relay system" evidence="1">
    <location>
        <position position="467"/>
    </location>
</feature>
<feature type="active site" description="Charge relay system" evidence="1">
    <location>
        <position position="497"/>
    </location>
</feature>
<comment type="function">
    <text evidence="1">Removes N-terminal dipeptides sequentially from polypeptides having unsubstituted N-termini provided that the penultimate residue is proline.</text>
</comment>
<comment type="catalytic activity">
    <reaction evidence="1">
        <text>Hydrolyzes Xaa-Pro-|- bonds to release unblocked, N-terminal dipeptides from substrates including Ala-Pro-|-p-nitroanilide and (sequentially) Tyr-Pro-|-Phe-Pro-|-Gly-Pro-|-Ile.</text>
        <dbReference type="EC" id="3.4.14.11"/>
    </reaction>
</comment>
<comment type="subunit">
    <text evidence="1">Homodimer.</text>
</comment>
<comment type="subcellular location">
    <subcellularLocation>
        <location evidence="1">Cytoplasm</location>
    </subcellularLocation>
</comment>
<comment type="similarity">
    <text evidence="1">Belongs to the peptidase S15 family.</text>
</comment>
<protein>
    <recommendedName>
        <fullName evidence="1">Xaa-Pro dipeptidyl-peptidase</fullName>
        <ecNumber evidence="1">3.4.14.11</ecNumber>
    </recommendedName>
    <alternativeName>
        <fullName evidence="1">X-Pro dipeptidyl-peptidase</fullName>
    </alternativeName>
    <alternativeName>
        <fullName evidence="1">X-prolyl-dipeptidyl aminopeptidase</fullName>
        <shortName evidence="1">X-PDAP</shortName>
    </alternativeName>
</protein>
<accession>Q3JZF9</accession>
<sequence length="761" mass="86832">MRYNQFSYIPTKPNEAFEELKGLGFPLNKKNSDKANLEAFLRHSFLNQTDTDYALSLLIVDAKTDALTFFKSNSDLTLENLQWIYLQLLGFVPFVDFKDPKAFLQDINFPVSYDNIFQSLHHLLACRGKSGNTLIDQLVADGLLHADNHYHFFNGKSLATFNTNQLIREVVYVETSLDTMSSGEHDLVKVNIIRPTTEHTIPTMMTASPYHQGINDPAADQKTYQMEGALAVKQPKHIQVDTKPFKEEVKHPSKLPISPATESFTHIDSYSLNDYFLSRGFANIYVSGVGTAGSTGFMTSGDYQQIQSFKAVIDWLNGKVTAFTSHKRDKQVKADWSNGLVATTGKSYLGTMSTGLATTGVEGLKVIIAEAAISTWYDYYRENGLVCSPGGYPGEDLDVLTELTYSRNLLAGDYIKNNDCYQALLNEQSKAIDRQSGDYNQYWHDRNYLTHVNNVKSRVVYTHGLQDWNVKPRHVYKIFNALPQTIKKHLFLHQGQHVYMHNWQSIDFRESMNALLSQELLGIDNHFQLEEVIWQDNTTEQTWQVLDAFGGNHQEQIGLGDSKKLIDNHYDKEAFDTYCKDFNVFKNDLFKGNNKTNQITINLPLKKNYLLNGQCKLHLRVKTSDKKAILSAQILDYGPKKRFKDTPTIKFLNSLDNGKNFAREALRELPFTKDHYRVISKGVLNLQNRTDLLTIEAIDPEQWFDIEFSLQPSIYQLSKGDNLRIILYTTDFEHTIRDNASYSITVDLSQSYLTIPTNQGN</sequence>
<dbReference type="EC" id="3.4.14.11" evidence="1"/>
<dbReference type="EMBL" id="CP000114">
    <property type="protein sequence ID" value="ABA44432.1"/>
    <property type="molecule type" value="Genomic_DNA"/>
</dbReference>
<dbReference type="RefSeq" id="WP_001270180.1">
    <property type="nucleotide sequence ID" value="NC_007432.1"/>
</dbReference>
<dbReference type="SMR" id="Q3JZF9"/>
<dbReference type="ESTHER" id="strag-pepx">
    <property type="family name" value="Lactobacillus_peptidase"/>
</dbReference>
<dbReference type="KEGG" id="sak:SAK_1744"/>
<dbReference type="HOGENOM" id="CLU_011800_0_0_9"/>
<dbReference type="GO" id="GO:0005737">
    <property type="term" value="C:cytoplasm"/>
    <property type="evidence" value="ECO:0007669"/>
    <property type="project" value="UniProtKB-SubCell"/>
</dbReference>
<dbReference type="GO" id="GO:0004177">
    <property type="term" value="F:aminopeptidase activity"/>
    <property type="evidence" value="ECO:0007669"/>
    <property type="project" value="UniProtKB-KW"/>
</dbReference>
<dbReference type="GO" id="GO:0008239">
    <property type="term" value="F:dipeptidyl-peptidase activity"/>
    <property type="evidence" value="ECO:0007669"/>
    <property type="project" value="UniProtKB-UniRule"/>
</dbReference>
<dbReference type="GO" id="GO:0008236">
    <property type="term" value="F:serine-type peptidase activity"/>
    <property type="evidence" value="ECO:0007669"/>
    <property type="project" value="UniProtKB-KW"/>
</dbReference>
<dbReference type="GO" id="GO:0006508">
    <property type="term" value="P:proteolysis"/>
    <property type="evidence" value="ECO:0007669"/>
    <property type="project" value="UniProtKB-KW"/>
</dbReference>
<dbReference type="Gene3D" id="1.10.246.70">
    <property type="match status" value="1"/>
</dbReference>
<dbReference type="Gene3D" id="3.40.50.1820">
    <property type="entry name" value="alpha/beta hydrolase"/>
    <property type="match status" value="1"/>
</dbReference>
<dbReference type="Gene3D" id="2.60.120.260">
    <property type="entry name" value="Galactose-binding domain-like"/>
    <property type="match status" value="1"/>
</dbReference>
<dbReference type="HAMAP" id="MF_00698">
    <property type="entry name" value="Aminopeptidase_S15"/>
    <property type="match status" value="1"/>
</dbReference>
<dbReference type="InterPro" id="IPR029058">
    <property type="entry name" value="AB_hydrolase_fold"/>
</dbReference>
<dbReference type="InterPro" id="IPR008979">
    <property type="entry name" value="Galactose-bd-like_sf"/>
</dbReference>
<dbReference type="InterPro" id="IPR008252">
    <property type="entry name" value="Pept_S15_Xpro"/>
</dbReference>
<dbReference type="InterPro" id="IPR015251">
    <property type="entry name" value="PepX_N_dom"/>
</dbReference>
<dbReference type="InterPro" id="IPR036313">
    <property type="entry name" value="PepX_N_dom_sf"/>
</dbReference>
<dbReference type="InterPro" id="IPR000383">
    <property type="entry name" value="Xaa-Pro-like_dom"/>
</dbReference>
<dbReference type="InterPro" id="IPR013736">
    <property type="entry name" value="Xaa-Pro_dipept_C"/>
</dbReference>
<dbReference type="InterPro" id="IPR050585">
    <property type="entry name" value="Xaa-Pro_dipeptidyl-ppase/CocE"/>
</dbReference>
<dbReference type="NCBIfam" id="NF003783">
    <property type="entry name" value="PRK05371.1-4"/>
    <property type="match status" value="1"/>
</dbReference>
<dbReference type="PANTHER" id="PTHR43056:SF10">
    <property type="entry name" value="COCE_NOND FAMILY, PUTATIVE (AFU_ORTHOLOGUE AFUA_7G00600)-RELATED"/>
    <property type="match status" value="1"/>
</dbReference>
<dbReference type="PANTHER" id="PTHR43056">
    <property type="entry name" value="PEPTIDASE S9 PROLYL OLIGOPEPTIDASE"/>
    <property type="match status" value="1"/>
</dbReference>
<dbReference type="Pfam" id="PF02129">
    <property type="entry name" value="Peptidase_S15"/>
    <property type="match status" value="1"/>
</dbReference>
<dbReference type="Pfam" id="PF08530">
    <property type="entry name" value="PepX_C"/>
    <property type="match status" value="1"/>
</dbReference>
<dbReference type="Pfam" id="PF09168">
    <property type="entry name" value="PepX_N"/>
    <property type="match status" value="1"/>
</dbReference>
<dbReference type="PRINTS" id="PR00923">
    <property type="entry name" value="LACTOPTASE"/>
</dbReference>
<dbReference type="SMART" id="SM00939">
    <property type="entry name" value="PepX_C"/>
    <property type="match status" value="1"/>
</dbReference>
<dbReference type="SMART" id="SM00940">
    <property type="entry name" value="PepX_N"/>
    <property type="match status" value="1"/>
</dbReference>
<dbReference type="SUPFAM" id="SSF53474">
    <property type="entry name" value="alpha/beta-Hydrolases"/>
    <property type="match status" value="1"/>
</dbReference>
<dbReference type="SUPFAM" id="SSF49785">
    <property type="entry name" value="Galactose-binding domain-like"/>
    <property type="match status" value="1"/>
</dbReference>
<dbReference type="SUPFAM" id="SSF81761">
    <property type="entry name" value="X-Prolyl dipeptidyl aminopeptidase PepX, N-terminal domain"/>
    <property type="match status" value="1"/>
</dbReference>
<name>PEPX_STRA1</name>
<reference key="1">
    <citation type="journal article" date="2005" name="Proc. Natl. Acad. Sci. U.S.A.">
        <title>Genome analysis of multiple pathogenic isolates of Streptococcus agalactiae: implications for the microbial 'pan-genome'.</title>
        <authorList>
            <person name="Tettelin H."/>
            <person name="Masignani V."/>
            <person name="Cieslewicz M.J."/>
            <person name="Donati C."/>
            <person name="Medini D."/>
            <person name="Ward N.L."/>
            <person name="Angiuoli S.V."/>
            <person name="Crabtree J."/>
            <person name="Jones A.L."/>
            <person name="Durkin A.S."/>
            <person name="DeBoy R.T."/>
            <person name="Davidsen T.M."/>
            <person name="Mora M."/>
            <person name="Scarselli M."/>
            <person name="Margarit y Ros I."/>
            <person name="Peterson J.D."/>
            <person name="Hauser C.R."/>
            <person name="Sundaram J.P."/>
            <person name="Nelson W.C."/>
            <person name="Madupu R."/>
            <person name="Brinkac L.M."/>
            <person name="Dodson R.J."/>
            <person name="Rosovitz M.J."/>
            <person name="Sullivan S.A."/>
            <person name="Daugherty S.C."/>
            <person name="Haft D.H."/>
            <person name="Selengut J."/>
            <person name="Gwinn M.L."/>
            <person name="Zhou L."/>
            <person name="Zafar N."/>
            <person name="Khouri H."/>
            <person name="Radune D."/>
            <person name="Dimitrov G."/>
            <person name="Watkins K."/>
            <person name="O'Connor K.J."/>
            <person name="Smith S."/>
            <person name="Utterback T.R."/>
            <person name="White O."/>
            <person name="Rubens C.E."/>
            <person name="Grandi G."/>
            <person name="Madoff L.C."/>
            <person name="Kasper D.L."/>
            <person name="Telford J.L."/>
            <person name="Wessels M.R."/>
            <person name="Rappuoli R."/>
            <person name="Fraser C.M."/>
        </authorList>
    </citation>
    <scope>NUCLEOTIDE SEQUENCE [LARGE SCALE GENOMIC DNA]</scope>
    <source>
        <strain>ATCC 27591 / A909 / CDC SS700</strain>
    </source>
</reference>
<gene>
    <name evidence="1" type="primary">pepX</name>
    <name type="ordered locus">SAK_1744</name>
</gene>
<proteinExistence type="inferred from homology"/>
<keyword id="KW-0031">Aminopeptidase</keyword>
<keyword id="KW-0963">Cytoplasm</keyword>
<keyword id="KW-0378">Hydrolase</keyword>
<keyword id="KW-0645">Protease</keyword>
<keyword id="KW-0720">Serine protease</keyword>
<evidence type="ECO:0000255" key="1">
    <source>
        <dbReference type="HAMAP-Rule" id="MF_00698"/>
    </source>
</evidence>
<organism>
    <name type="scientific">Streptococcus agalactiae serotype Ia (strain ATCC 27591 / A909 / CDC SS700)</name>
    <dbReference type="NCBI Taxonomy" id="205921"/>
    <lineage>
        <taxon>Bacteria</taxon>
        <taxon>Bacillati</taxon>
        <taxon>Bacillota</taxon>
        <taxon>Bacilli</taxon>
        <taxon>Lactobacillales</taxon>
        <taxon>Streptococcaceae</taxon>
        <taxon>Streptococcus</taxon>
    </lineage>
</organism>